<evidence type="ECO:0000255" key="1">
    <source>
        <dbReference type="HAMAP-Rule" id="MF_00317"/>
    </source>
</evidence>
<protein>
    <recommendedName>
        <fullName evidence="1">DNA polymerase sliding clamp</fullName>
    </recommendedName>
    <alternativeName>
        <fullName evidence="1">Proliferating cell nuclear antigen homolog</fullName>
        <shortName evidence="1">PCNA</shortName>
    </alternativeName>
</protein>
<reference key="1">
    <citation type="submission" date="2007-03" db="EMBL/GenBank/DDBJ databases">
        <title>Complete sequence of chromosome of Methanococcus maripaludis C5.</title>
        <authorList>
            <consortium name="US DOE Joint Genome Institute"/>
            <person name="Copeland A."/>
            <person name="Lucas S."/>
            <person name="Lapidus A."/>
            <person name="Barry K."/>
            <person name="Glavina del Rio T."/>
            <person name="Dalin E."/>
            <person name="Tice H."/>
            <person name="Pitluck S."/>
            <person name="Chertkov O."/>
            <person name="Brettin T."/>
            <person name="Bruce D."/>
            <person name="Han C."/>
            <person name="Detter J.C."/>
            <person name="Schmutz J."/>
            <person name="Larimer F."/>
            <person name="Land M."/>
            <person name="Hauser L."/>
            <person name="Kyrpides N."/>
            <person name="Mikhailova N."/>
            <person name="Sieprawska-Lupa M."/>
            <person name="Whitman W.B."/>
            <person name="Richardson P."/>
        </authorList>
    </citation>
    <scope>NUCLEOTIDE SEQUENCE [LARGE SCALE GENOMIC DNA]</scope>
    <source>
        <strain>C5 / ATCC BAA-1333</strain>
    </source>
</reference>
<comment type="function">
    <text evidence="1">Sliding clamp subunit that acts as a moving platform for DNA processing. Responsible for tethering the catalytic subunit of DNA polymerase and other proteins to DNA during high-speed replication.</text>
</comment>
<comment type="subunit">
    <text evidence="1">Homotrimer. The subunits circularize to form a toroid; DNA passes through its center. Replication factor C (RFC) is required to load the toroid on the DNA.</text>
</comment>
<comment type="similarity">
    <text evidence="1">Belongs to the PCNA family.</text>
</comment>
<dbReference type="EMBL" id="CP000609">
    <property type="protein sequence ID" value="ABO35992.1"/>
    <property type="molecule type" value="Genomic_DNA"/>
</dbReference>
<dbReference type="RefSeq" id="WP_011869439.1">
    <property type="nucleotide sequence ID" value="NC_009135.1"/>
</dbReference>
<dbReference type="SMR" id="A4G0K8"/>
<dbReference type="STRING" id="402880.MmarC5_1695"/>
<dbReference type="GeneID" id="4928074"/>
<dbReference type="KEGG" id="mmq:MmarC5_1695"/>
<dbReference type="eggNOG" id="arCOG00488">
    <property type="taxonomic scope" value="Archaea"/>
</dbReference>
<dbReference type="HOGENOM" id="CLU_043978_1_0_2"/>
<dbReference type="OrthoDB" id="14749at2157"/>
<dbReference type="Proteomes" id="UP000000253">
    <property type="component" value="Chromosome"/>
</dbReference>
<dbReference type="GO" id="GO:0003677">
    <property type="term" value="F:DNA binding"/>
    <property type="evidence" value="ECO:0007669"/>
    <property type="project" value="UniProtKB-UniRule"/>
</dbReference>
<dbReference type="GO" id="GO:0030337">
    <property type="term" value="F:DNA polymerase processivity factor activity"/>
    <property type="evidence" value="ECO:0007669"/>
    <property type="project" value="UniProtKB-UniRule"/>
</dbReference>
<dbReference type="GO" id="GO:0006272">
    <property type="term" value="P:leading strand elongation"/>
    <property type="evidence" value="ECO:0007669"/>
    <property type="project" value="TreeGrafter"/>
</dbReference>
<dbReference type="GO" id="GO:0006275">
    <property type="term" value="P:regulation of DNA replication"/>
    <property type="evidence" value="ECO:0007669"/>
    <property type="project" value="UniProtKB-UniRule"/>
</dbReference>
<dbReference type="CDD" id="cd00577">
    <property type="entry name" value="PCNA"/>
    <property type="match status" value="1"/>
</dbReference>
<dbReference type="Gene3D" id="3.70.10.10">
    <property type="match status" value="1"/>
</dbReference>
<dbReference type="HAMAP" id="MF_00317">
    <property type="entry name" value="DNApol_clamp_arch"/>
    <property type="match status" value="1"/>
</dbReference>
<dbReference type="InterPro" id="IPR046938">
    <property type="entry name" value="DNA_clamp_sf"/>
</dbReference>
<dbReference type="InterPro" id="IPR000730">
    <property type="entry name" value="Pr_cel_nuc_antig"/>
</dbReference>
<dbReference type="InterPro" id="IPR022649">
    <property type="entry name" value="Pr_cel_nuc_antig_C"/>
</dbReference>
<dbReference type="InterPro" id="IPR022659">
    <property type="entry name" value="Pr_cel_nuc_antig_CS"/>
</dbReference>
<dbReference type="InterPro" id="IPR022648">
    <property type="entry name" value="Pr_cel_nuc_antig_N"/>
</dbReference>
<dbReference type="NCBIfam" id="TIGR00590">
    <property type="entry name" value="pcna"/>
    <property type="match status" value="1"/>
</dbReference>
<dbReference type="NCBIfam" id="NF002219">
    <property type="entry name" value="PRK01115.1-2"/>
    <property type="match status" value="1"/>
</dbReference>
<dbReference type="NCBIfam" id="NF002222">
    <property type="entry name" value="PRK01115.1-5"/>
    <property type="match status" value="1"/>
</dbReference>
<dbReference type="PANTHER" id="PTHR11352">
    <property type="entry name" value="PROLIFERATING CELL NUCLEAR ANTIGEN"/>
    <property type="match status" value="1"/>
</dbReference>
<dbReference type="PANTHER" id="PTHR11352:SF0">
    <property type="entry name" value="PROLIFERATING CELL NUCLEAR ANTIGEN"/>
    <property type="match status" value="1"/>
</dbReference>
<dbReference type="Pfam" id="PF02747">
    <property type="entry name" value="PCNA_C"/>
    <property type="match status" value="1"/>
</dbReference>
<dbReference type="Pfam" id="PF00705">
    <property type="entry name" value="PCNA_N"/>
    <property type="match status" value="1"/>
</dbReference>
<dbReference type="PRINTS" id="PR00339">
    <property type="entry name" value="PCNACYCLIN"/>
</dbReference>
<dbReference type="SUPFAM" id="SSF55979">
    <property type="entry name" value="DNA clamp"/>
    <property type="match status" value="2"/>
</dbReference>
<dbReference type="PROSITE" id="PS01251">
    <property type="entry name" value="PCNA_1"/>
    <property type="match status" value="1"/>
</dbReference>
<feature type="chain" id="PRO_1000019172" description="DNA polymerase sliding clamp">
    <location>
        <begin position="1"/>
        <end position="250"/>
    </location>
</feature>
<gene>
    <name evidence="1" type="primary">pcn</name>
    <name type="ordered locus">MmarC5_1695</name>
</gene>
<accession>A4G0K8</accession>
<organism>
    <name type="scientific">Methanococcus maripaludis (strain C5 / ATCC BAA-1333)</name>
    <dbReference type="NCBI Taxonomy" id="402880"/>
    <lineage>
        <taxon>Archaea</taxon>
        <taxon>Methanobacteriati</taxon>
        <taxon>Methanobacteriota</taxon>
        <taxon>Methanomada group</taxon>
        <taxon>Methanococci</taxon>
        <taxon>Methanococcales</taxon>
        <taxon>Methanococcaceae</taxon>
        <taxon>Methanococcus</taxon>
    </lineage>
</organism>
<proteinExistence type="inferred from homology"/>
<name>PCNA_METM5</name>
<sequence>MFRATCNTRDFKKVINATSNLVDEICFEVDENGIKASAMDPSHVALVSMEMPKDVFEEYEGDVHDIGIDLEALKKIIARGKGDEKLILDLDAEKNKLNVTFKSNVTRKFSIALYDVSSSNLKVPDIEYPNNVSIKAGAFVEALKDAELVNDHITLKVDEDKFIIYSKGDLNQSETVFDNGVDDDDDTLAEFNMGEASRSTFNLAYLKDLTKSTAAEDLLKIYLGSDMPVKIEYEVSGSKLVFLLAPRIES</sequence>
<keyword id="KW-0235">DNA replication</keyword>
<keyword id="KW-0238">DNA-binding</keyword>